<organism>
    <name type="scientific">Eremothecium gossypii (strain ATCC 10895 / CBS 109.51 / FGSC 9923 / NRRL Y-1056)</name>
    <name type="common">Yeast</name>
    <name type="synonym">Ashbya gossypii</name>
    <dbReference type="NCBI Taxonomy" id="284811"/>
    <lineage>
        <taxon>Eukaryota</taxon>
        <taxon>Fungi</taxon>
        <taxon>Dikarya</taxon>
        <taxon>Ascomycota</taxon>
        <taxon>Saccharomycotina</taxon>
        <taxon>Saccharomycetes</taxon>
        <taxon>Saccharomycetales</taxon>
        <taxon>Saccharomycetaceae</taxon>
        <taxon>Eremothecium</taxon>
    </lineage>
</organism>
<gene>
    <name type="primary">UBC6</name>
    <name type="ordered locus">AGR372W</name>
</gene>
<keyword id="KW-0067">ATP-binding</keyword>
<keyword id="KW-0256">Endoplasmic reticulum</keyword>
<keyword id="KW-0472">Membrane</keyword>
<keyword id="KW-0547">Nucleotide-binding</keyword>
<keyword id="KW-1185">Reference proteome</keyword>
<keyword id="KW-0808">Transferase</keyword>
<keyword id="KW-0812">Transmembrane</keyword>
<keyword id="KW-1133">Transmembrane helix</keyword>
<keyword id="KW-0833">Ubl conjugation pathway</keyword>
<accession>Q74Z34</accession>
<sequence>MASRQAYKRLSKEYKMMTENPPPYIVAAPKEDNILVWHYVITGPPETPYEDGQYHGTLVFPNDYPFNPPAIRMLTPNGRFRENTRLCLSMSDYHPDTWNPSWSVATILTGLLSFMTTDESSIGTMESTDSTKRKYAAKSKEHNATRSPIFCQIFPELAEQNRRDIEEAKKRKDETVVEDEHPFKQEQVVSLEEINDPEDRIRAQMLQQPAGNGTTSNSIGRSLLFVLFSLAALLVAVCYTRV</sequence>
<name>UBC6_EREGS</name>
<feature type="chain" id="PRO_0000082547" description="Ubiquitin-conjugating enzyme E2 6">
    <location>
        <begin position="1"/>
        <end position="242"/>
    </location>
</feature>
<feature type="topological domain" description="Cytoplasmic" evidence="2">
    <location>
        <begin position="1"/>
        <end position="217"/>
    </location>
</feature>
<feature type="transmembrane region" description="Helical" evidence="2">
    <location>
        <begin position="218"/>
        <end position="240"/>
    </location>
</feature>
<feature type="domain" description="UBC core" evidence="3">
    <location>
        <begin position="5"/>
        <end position="163"/>
    </location>
</feature>
<feature type="active site" description="Glycyl thioester intermediate" evidence="3">
    <location>
        <position position="87"/>
    </location>
</feature>
<protein>
    <recommendedName>
        <fullName>Ubiquitin-conjugating enzyme E2 6</fullName>
        <ecNumber>2.3.2.23</ecNumber>
    </recommendedName>
    <alternativeName>
        <fullName>E2 ubiquitin-conjugating enzyme 6</fullName>
    </alternativeName>
    <alternativeName>
        <fullName>Ubiquitin carrier protein UBC6</fullName>
    </alternativeName>
    <alternativeName>
        <fullName>Ubiquitin-protein ligase UBC6</fullName>
    </alternativeName>
</protein>
<proteinExistence type="inferred from homology"/>
<dbReference type="EC" id="2.3.2.23"/>
<dbReference type="EMBL" id="AE016820">
    <property type="protein sequence ID" value="AAS54862.1"/>
    <property type="molecule type" value="Genomic_DNA"/>
</dbReference>
<dbReference type="RefSeq" id="NP_987038.1">
    <property type="nucleotide sequence ID" value="NM_212100.1"/>
</dbReference>
<dbReference type="SMR" id="Q74Z34"/>
<dbReference type="FunCoup" id="Q74Z34">
    <property type="interactions" value="1026"/>
</dbReference>
<dbReference type="STRING" id="284811.Q74Z34"/>
<dbReference type="EnsemblFungi" id="AAS54862">
    <property type="protein sequence ID" value="AAS54862"/>
    <property type="gene ID" value="AGOS_AGR372W"/>
</dbReference>
<dbReference type="GeneID" id="4623341"/>
<dbReference type="KEGG" id="ago:AGOS_AGR372W"/>
<dbReference type="eggNOG" id="KOG0894">
    <property type="taxonomic scope" value="Eukaryota"/>
</dbReference>
<dbReference type="HOGENOM" id="CLU_041481_1_0_1"/>
<dbReference type="InParanoid" id="Q74Z34"/>
<dbReference type="OMA" id="GWSVATI"/>
<dbReference type="OrthoDB" id="1158011at2759"/>
<dbReference type="UniPathway" id="UPA00143"/>
<dbReference type="Proteomes" id="UP000000591">
    <property type="component" value="Chromosome VII"/>
</dbReference>
<dbReference type="GO" id="GO:0005789">
    <property type="term" value="C:endoplasmic reticulum membrane"/>
    <property type="evidence" value="ECO:0007669"/>
    <property type="project" value="UniProtKB-SubCell"/>
</dbReference>
<dbReference type="GO" id="GO:0005524">
    <property type="term" value="F:ATP binding"/>
    <property type="evidence" value="ECO:0007669"/>
    <property type="project" value="UniProtKB-KW"/>
</dbReference>
<dbReference type="GO" id="GO:0061631">
    <property type="term" value="F:ubiquitin conjugating enzyme activity"/>
    <property type="evidence" value="ECO:0007669"/>
    <property type="project" value="UniProtKB-EC"/>
</dbReference>
<dbReference type="GO" id="GO:0016567">
    <property type="term" value="P:protein ubiquitination"/>
    <property type="evidence" value="ECO:0007669"/>
    <property type="project" value="UniProtKB-UniPathway"/>
</dbReference>
<dbReference type="CDD" id="cd23799">
    <property type="entry name" value="UBCc_UBE2J"/>
    <property type="match status" value="1"/>
</dbReference>
<dbReference type="FunFam" id="3.10.110.10:FF:000023">
    <property type="entry name" value="Ubiquitin-conjugating enzyme E2 J2"/>
    <property type="match status" value="1"/>
</dbReference>
<dbReference type="Gene3D" id="3.10.110.10">
    <property type="entry name" value="Ubiquitin Conjugating Enzyme"/>
    <property type="match status" value="1"/>
</dbReference>
<dbReference type="InterPro" id="IPR050113">
    <property type="entry name" value="Ub_conjugating_enzyme"/>
</dbReference>
<dbReference type="InterPro" id="IPR000608">
    <property type="entry name" value="UBQ-conjugat_E2_core"/>
</dbReference>
<dbReference type="InterPro" id="IPR016135">
    <property type="entry name" value="UBQ-conjugating_enzyme/RWD"/>
</dbReference>
<dbReference type="PANTHER" id="PTHR24067">
    <property type="entry name" value="UBIQUITIN-CONJUGATING ENZYME E2"/>
    <property type="match status" value="1"/>
</dbReference>
<dbReference type="Pfam" id="PF00179">
    <property type="entry name" value="UQ_con"/>
    <property type="match status" value="1"/>
</dbReference>
<dbReference type="SMART" id="SM00212">
    <property type="entry name" value="UBCc"/>
    <property type="match status" value="1"/>
</dbReference>
<dbReference type="SUPFAM" id="SSF54495">
    <property type="entry name" value="UBC-like"/>
    <property type="match status" value="1"/>
</dbReference>
<dbReference type="PROSITE" id="PS50127">
    <property type="entry name" value="UBC_2"/>
    <property type="match status" value="1"/>
</dbReference>
<reference key="1">
    <citation type="journal article" date="2004" name="Science">
        <title>The Ashbya gossypii genome as a tool for mapping the ancient Saccharomyces cerevisiae genome.</title>
        <authorList>
            <person name="Dietrich F.S."/>
            <person name="Voegeli S."/>
            <person name="Brachat S."/>
            <person name="Lerch A."/>
            <person name="Gates K."/>
            <person name="Steiner S."/>
            <person name="Mohr C."/>
            <person name="Poehlmann R."/>
            <person name="Luedi P."/>
            <person name="Choi S."/>
            <person name="Wing R.A."/>
            <person name="Flavier A."/>
            <person name="Gaffney T.D."/>
            <person name="Philippsen P."/>
        </authorList>
    </citation>
    <scope>NUCLEOTIDE SEQUENCE [LARGE SCALE GENOMIC DNA]</scope>
    <source>
        <strain>ATCC 10895 / CBS 109.51 / FGSC 9923 / NRRL Y-1056</strain>
    </source>
</reference>
<reference key="2">
    <citation type="journal article" date="2013" name="G3 (Bethesda)">
        <title>Genomes of Ashbya fungi isolated from insects reveal four mating-type loci, numerous translocations, lack of transposons, and distinct gene duplications.</title>
        <authorList>
            <person name="Dietrich F.S."/>
            <person name="Voegeli S."/>
            <person name="Kuo S."/>
            <person name="Philippsen P."/>
        </authorList>
    </citation>
    <scope>GENOME REANNOTATION</scope>
    <source>
        <strain>ATCC 10895 / CBS 109.51 / FGSC 9923 / NRRL Y-1056</strain>
    </source>
</reference>
<comment type="function">
    <text evidence="3">Catalyzes the covalent attachment of ubiquitin to other proteins. Functions in degradation of misfolded or regulated proteins localized in the endoplasmic reticulum (ER) lumen or membrane via the ubiquitin-proteasome system. Cognate E2 conjugating enzyme for the DOA10 ubiquitin ligase complex, which is part of the ERAD-C pathway responsible for the rapid degradation of membrane proteins with misfolded cytoplasmic domains.</text>
</comment>
<comment type="catalytic activity">
    <reaction evidence="3">
        <text>S-ubiquitinyl-[E1 ubiquitin-activating enzyme]-L-cysteine + [E2 ubiquitin-conjugating enzyme]-L-cysteine = [E1 ubiquitin-activating enzyme]-L-cysteine + S-ubiquitinyl-[E2 ubiquitin-conjugating enzyme]-L-cysteine.</text>
        <dbReference type="EC" id="2.3.2.23"/>
    </reaction>
</comment>
<comment type="pathway">
    <text evidence="3">Protein modification; protein ubiquitination.</text>
</comment>
<comment type="subcellular location">
    <subcellularLocation>
        <location evidence="1">Endoplasmic reticulum membrane</location>
    </subcellularLocation>
</comment>
<comment type="similarity">
    <text evidence="3">Belongs to the ubiquitin-conjugating enzyme family.</text>
</comment>
<evidence type="ECO:0000250" key="1">
    <source>
        <dbReference type="UniProtKB" id="Q5VVX9"/>
    </source>
</evidence>
<evidence type="ECO:0000255" key="2"/>
<evidence type="ECO:0000255" key="3">
    <source>
        <dbReference type="PROSITE-ProRule" id="PRU00388"/>
    </source>
</evidence>